<proteinExistence type="inferred from homology"/>
<sequence>MYFLKKIVNLFSSKIESEDNNVKKDDLTQPRKQSPEARKRRNRRIIFWLIILLIIGTIIGVIIYFSVRKEYDNVIVKSAQTEVVNNKKVLYLNTIRPNSTQITRYTIDEDQLLTARVNILNNTNFQIISNASSLGLSRISFNIVREGVEKFKLGETNIYAPISGNTNNQWNWLTSIITQNAGIPSSGFNPQVIISPLISIIFFIIFLYIILRVSKAQSDSLLGTNKANAKLTKSGVRFSDVAGIAEVKEELIEIVDFLKEPKKYVAAGARIPKGVMLYGPPGTGKTLIAKAVAGEANVPFFQTTGSSFEDTFVGVGARRVRELFEKARKSAPAIIFIDEIDSVAKKRGNSLTAVQDQTINQLLSELDGFDTSSGVIVMAATNRLDTLDDAILRPGRFDRQISVNLPDILEREQILRIHSRNKNLSAKVSLEDIARRTAGFSGAQLENVLNEAALLSVRDKATSIHMNHLDEAIDRVIAGPSRPNKVISEREREQVSYHEAGHALIGLYSPGADVVQKITIVARGRAAGYTLQTPERNENILQNKTELISRVRTALGGRAAEELIYGPNEITTGAANDFYKITNIVRAMVASFGMTDVGLTQYIATEGVDNPYRNSYSEQTALAIDIEIEKIIQREYKIVKEMINEHREELELIVQTLLELETILKPQIDYIHQYKQLPPEVIANKNKREASQKQANSSVEEAKVVDDEESIKDKEKDQKSN</sequence>
<evidence type="ECO:0000255" key="1">
    <source>
        <dbReference type="HAMAP-Rule" id="MF_01458"/>
    </source>
</evidence>
<evidence type="ECO:0000256" key="2">
    <source>
        <dbReference type="SAM" id="MobiDB-lite"/>
    </source>
</evidence>
<name>FTSH_UREP2</name>
<organism>
    <name type="scientific">Ureaplasma parvum serovar 3 (strain ATCC 27815 / 27 / NCTC 11736)</name>
    <dbReference type="NCBI Taxonomy" id="505682"/>
    <lineage>
        <taxon>Bacteria</taxon>
        <taxon>Bacillati</taxon>
        <taxon>Mycoplasmatota</taxon>
        <taxon>Mycoplasmoidales</taxon>
        <taxon>Mycoplasmoidaceae</taxon>
        <taxon>Ureaplasma</taxon>
    </lineage>
</organism>
<reference key="1">
    <citation type="submission" date="2008-02" db="EMBL/GenBank/DDBJ databases">
        <title>Genome sequence of Ureaplasma parvum serovar 3.</title>
        <authorList>
            <person name="Methe B.A."/>
            <person name="Glass J."/>
            <person name="Waites K."/>
            <person name="Shrivastava S."/>
        </authorList>
    </citation>
    <scope>NUCLEOTIDE SEQUENCE [LARGE SCALE GENOMIC DNA]</scope>
    <source>
        <strain>ATCC 27815 / 27 / NCTC 11736</strain>
    </source>
</reference>
<comment type="function">
    <text evidence="1">Acts as a processive, ATP-dependent zinc metallopeptidase for both cytoplasmic and membrane proteins. Plays a role in the quality control of integral membrane proteins.</text>
</comment>
<comment type="cofactor">
    <cofactor evidence="1">
        <name>Zn(2+)</name>
        <dbReference type="ChEBI" id="CHEBI:29105"/>
    </cofactor>
    <text evidence="1">Binds 1 zinc ion per subunit.</text>
</comment>
<comment type="subunit">
    <text evidence="1">Homohexamer.</text>
</comment>
<comment type="subcellular location">
    <subcellularLocation>
        <location evidence="1">Cell membrane</location>
        <topology evidence="1">Multi-pass membrane protein</topology>
        <orientation evidence="1">Cytoplasmic side</orientation>
    </subcellularLocation>
</comment>
<comment type="similarity">
    <text evidence="1">In the central section; belongs to the AAA ATPase family.</text>
</comment>
<comment type="similarity">
    <text evidence="1">In the C-terminal section; belongs to the peptidase M41 family.</text>
</comment>
<keyword id="KW-0067">ATP-binding</keyword>
<keyword id="KW-1003">Cell membrane</keyword>
<keyword id="KW-0378">Hydrolase</keyword>
<keyword id="KW-0472">Membrane</keyword>
<keyword id="KW-0479">Metal-binding</keyword>
<keyword id="KW-0482">Metalloprotease</keyword>
<keyword id="KW-0547">Nucleotide-binding</keyword>
<keyword id="KW-0645">Protease</keyword>
<keyword id="KW-0812">Transmembrane</keyword>
<keyword id="KW-1133">Transmembrane helix</keyword>
<keyword id="KW-0862">Zinc</keyword>
<dbReference type="EC" id="3.4.24.-" evidence="1"/>
<dbReference type="EMBL" id="CP000942">
    <property type="protein sequence ID" value="ACA32692.1"/>
    <property type="molecule type" value="Genomic_DNA"/>
</dbReference>
<dbReference type="RefSeq" id="WP_006688776.1">
    <property type="nucleotide sequence ID" value="NC_010503.1"/>
</dbReference>
<dbReference type="SMR" id="B1AI94"/>
<dbReference type="GeneID" id="29672173"/>
<dbReference type="KEGG" id="upa:UPA3_0108"/>
<dbReference type="HOGENOM" id="CLU_000688_16_2_14"/>
<dbReference type="Proteomes" id="UP000002162">
    <property type="component" value="Chromosome"/>
</dbReference>
<dbReference type="GO" id="GO:0005886">
    <property type="term" value="C:plasma membrane"/>
    <property type="evidence" value="ECO:0007669"/>
    <property type="project" value="UniProtKB-SubCell"/>
</dbReference>
<dbReference type="GO" id="GO:0005524">
    <property type="term" value="F:ATP binding"/>
    <property type="evidence" value="ECO:0007669"/>
    <property type="project" value="UniProtKB-UniRule"/>
</dbReference>
<dbReference type="GO" id="GO:0016887">
    <property type="term" value="F:ATP hydrolysis activity"/>
    <property type="evidence" value="ECO:0007669"/>
    <property type="project" value="UniProtKB-UniRule"/>
</dbReference>
<dbReference type="GO" id="GO:0004176">
    <property type="term" value="F:ATP-dependent peptidase activity"/>
    <property type="evidence" value="ECO:0007669"/>
    <property type="project" value="InterPro"/>
</dbReference>
<dbReference type="GO" id="GO:0004222">
    <property type="term" value="F:metalloendopeptidase activity"/>
    <property type="evidence" value="ECO:0007669"/>
    <property type="project" value="InterPro"/>
</dbReference>
<dbReference type="GO" id="GO:0008270">
    <property type="term" value="F:zinc ion binding"/>
    <property type="evidence" value="ECO:0007669"/>
    <property type="project" value="UniProtKB-UniRule"/>
</dbReference>
<dbReference type="GO" id="GO:0030163">
    <property type="term" value="P:protein catabolic process"/>
    <property type="evidence" value="ECO:0007669"/>
    <property type="project" value="UniProtKB-UniRule"/>
</dbReference>
<dbReference type="GO" id="GO:0006508">
    <property type="term" value="P:proteolysis"/>
    <property type="evidence" value="ECO:0007669"/>
    <property type="project" value="UniProtKB-KW"/>
</dbReference>
<dbReference type="CDD" id="cd19501">
    <property type="entry name" value="RecA-like_FtsH"/>
    <property type="match status" value="1"/>
</dbReference>
<dbReference type="FunFam" id="1.10.8.60:FF:000001">
    <property type="entry name" value="ATP-dependent zinc metalloprotease FtsH"/>
    <property type="match status" value="1"/>
</dbReference>
<dbReference type="FunFam" id="1.20.58.760:FF:000001">
    <property type="entry name" value="ATP-dependent zinc metalloprotease FtsH"/>
    <property type="match status" value="1"/>
</dbReference>
<dbReference type="FunFam" id="3.40.50.300:FF:000352">
    <property type="entry name" value="ATP-dependent zinc metalloprotease FTSH 7, chloroplastic"/>
    <property type="match status" value="1"/>
</dbReference>
<dbReference type="Gene3D" id="1.10.8.60">
    <property type="match status" value="1"/>
</dbReference>
<dbReference type="Gene3D" id="3.40.50.300">
    <property type="entry name" value="P-loop containing nucleotide triphosphate hydrolases"/>
    <property type="match status" value="1"/>
</dbReference>
<dbReference type="Gene3D" id="1.20.58.760">
    <property type="entry name" value="Peptidase M41"/>
    <property type="match status" value="1"/>
</dbReference>
<dbReference type="HAMAP" id="MF_01458">
    <property type="entry name" value="FtsH"/>
    <property type="match status" value="1"/>
</dbReference>
<dbReference type="InterPro" id="IPR003593">
    <property type="entry name" value="AAA+_ATPase"/>
</dbReference>
<dbReference type="InterPro" id="IPR041569">
    <property type="entry name" value="AAA_lid_3"/>
</dbReference>
<dbReference type="InterPro" id="IPR003959">
    <property type="entry name" value="ATPase_AAA_core"/>
</dbReference>
<dbReference type="InterPro" id="IPR003960">
    <property type="entry name" value="ATPase_AAA_CS"/>
</dbReference>
<dbReference type="InterPro" id="IPR005936">
    <property type="entry name" value="FtsH"/>
</dbReference>
<dbReference type="InterPro" id="IPR027417">
    <property type="entry name" value="P-loop_NTPase"/>
</dbReference>
<dbReference type="InterPro" id="IPR000642">
    <property type="entry name" value="Peptidase_M41"/>
</dbReference>
<dbReference type="InterPro" id="IPR037219">
    <property type="entry name" value="Peptidase_M41-like"/>
</dbReference>
<dbReference type="NCBIfam" id="TIGR01241">
    <property type="entry name" value="FtsH_fam"/>
    <property type="match status" value="1"/>
</dbReference>
<dbReference type="PANTHER" id="PTHR23076:SF97">
    <property type="entry name" value="ATP-DEPENDENT ZINC METALLOPROTEASE YME1L1"/>
    <property type="match status" value="1"/>
</dbReference>
<dbReference type="PANTHER" id="PTHR23076">
    <property type="entry name" value="METALLOPROTEASE M41 FTSH"/>
    <property type="match status" value="1"/>
</dbReference>
<dbReference type="Pfam" id="PF00004">
    <property type="entry name" value="AAA"/>
    <property type="match status" value="1"/>
</dbReference>
<dbReference type="Pfam" id="PF17862">
    <property type="entry name" value="AAA_lid_3"/>
    <property type="match status" value="1"/>
</dbReference>
<dbReference type="Pfam" id="PF01434">
    <property type="entry name" value="Peptidase_M41"/>
    <property type="match status" value="1"/>
</dbReference>
<dbReference type="SMART" id="SM00382">
    <property type="entry name" value="AAA"/>
    <property type="match status" value="1"/>
</dbReference>
<dbReference type="SUPFAM" id="SSF140990">
    <property type="entry name" value="FtsH protease domain-like"/>
    <property type="match status" value="1"/>
</dbReference>
<dbReference type="SUPFAM" id="SSF52540">
    <property type="entry name" value="P-loop containing nucleoside triphosphate hydrolases"/>
    <property type="match status" value="1"/>
</dbReference>
<dbReference type="PROSITE" id="PS00674">
    <property type="entry name" value="AAA"/>
    <property type="match status" value="1"/>
</dbReference>
<protein>
    <recommendedName>
        <fullName evidence="1">ATP-dependent zinc metalloprotease FtsH</fullName>
        <ecNumber evidence="1">3.4.24.-</ecNumber>
    </recommendedName>
</protein>
<feature type="chain" id="PRO_0000400417" description="ATP-dependent zinc metalloprotease FtsH">
    <location>
        <begin position="1"/>
        <end position="721"/>
    </location>
</feature>
<feature type="topological domain" description="Cytoplasmic" evidence="1">
    <location>
        <begin position="1"/>
        <end position="44"/>
    </location>
</feature>
<feature type="transmembrane region" description="Helical" evidence="1">
    <location>
        <begin position="45"/>
        <end position="65"/>
    </location>
</feature>
<feature type="topological domain" description="Extracellular" evidence="1">
    <location>
        <begin position="66"/>
        <end position="190"/>
    </location>
</feature>
<feature type="transmembrane region" description="Helical" evidence="1">
    <location>
        <begin position="191"/>
        <end position="211"/>
    </location>
</feature>
<feature type="topological domain" description="Cytoplasmic" evidence="1">
    <location>
        <begin position="212"/>
        <end position="721"/>
    </location>
</feature>
<feature type="region of interest" description="Disordered" evidence="2">
    <location>
        <begin position="686"/>
        <end position="721"/>
    </location>
</feature>
<feature type="compositionally biased region" description="Basic and acidic residues" evidence="2">
    <location>
        <begin position="700"/>
        <end position="721"/>
    </location>
</feature>
<feature type="active site" evidence="1">
    <location>
        <position position="499"/>
    </location>
</feature>
<feature type="binding site" evidence="1">
    <location>
        <begin position="279"/>
        <end position="286"/>
    </location>
    <ligand>
        <name>ATP</name>
        <dbReference type="ChEBI" id="CHEBI:30616"/>
    </ligand>
</feature>
<feature type="binding site" evidence="1">
    <location>
        <position position="498"/>
    </location>
    <ligand>
        <name>Zn(2+)</name>
        <dbReference type="ChEBI" id="CHEBI:29105"/>
        <note>catalytic</note>
    </ligand>
</feature>
<feature type="binding site" evidence="1">
    <location>
        <position position="502"/>
    </location>
    <ligand>
        <name>Zn(2+)</name>
        <dbReference type="ChEBI" id="CHEBI:29105"/>
        <note>catalytic</note>
    </ligand>
</feature>
<feature type="binding site" evidence="1">
    <location>
        <position position="577"/>
    </location>
    <ligand>
        <name>Zn(2+)</name>
        <dbReference type="ChEBI" id="CHEBI:29105"/>
        <note>catalytic</note>
    </ligand>
</feature>
<accession>B1AI94</accession>
<gene>
    <name evidence="1" type="primary">ftsH</name>
    <name type="ordered locus">UPA3_0108</name>
</gene>